<comment type="function">
    <text evidence="1">May bind long-chain fatty acids, such as palmitate, and may play a role in lipid transport or fatty acid metabolism.</text>
</comment>
<name>YQAC_LACLA</name>
<gene>
    <name type="primary">yqaC</name>
    <name type="ordered locus">LL1562</name>
    <name type="ORF">L4747</name>
</gene>
<accession>Q9CFB9</accession>
<organism>
    <name type="scientific">Lactococcus lactis subsp. lactis (strain IL1403)</name>
    <name type="common">Streptococcus lactis</name>
    <dbReference type="NCBI Taxonomy" id="272623"/>
    <lineage>
        <taxon>Bacteria</taxon>
        <taxon>Bacillati</taxon>
        <taxon>Bacillota</taxon>
        <taxon>Bacilli</taxon>
        <taxon>Lactobacillales</taxon>
        <taxon>Streptococcaceae</taxon>
        <taxon>Lactococcus</taxon>
    </lineage>
</organism>
<proteinExistence type="inferred from homology"/>
<sequence>MKLAVITDSSADFAEKYKTYENLFVLDIPISIDGVDYDLQKISHEEWYDLMAEAQEVPKTSQPRVAELDRLLKDLEKQGYTHVLGLFLPAAISGFYQNIFYLQSEYEQMKVVFPETFITSSPLGYMVETVLDLAEAGVEFEEIIAKFEEQRDGDRAYMLVDDLHWLAKGGRLSNGAAVLGTLLNIKPVLTFSTEGKVEVFEKVRTVKKTMSRMKELLLKDAKDPLAYKVYVIHTRAEDRAQELYDYALSQGFDDVEIVTFGPVIATHLGLNTVAYGISPKK</sequence>
<dbReference type="EMBL" id="AE005176">
    <property type="protein sequence ID" value="AAK05660.1"/>
    <property type="molecule type" value="Genomic_DNA"/>
</dbReference>
<dbReference type="PIR" id="B86820">
    <property type="entry name" value="B86820"/>
</dbReference>
<dbReference type="RefSeq" id="NP_267718.1">
    <property type="nucleotide sequence ID" value="NC_002662.1"/>
</dbReference>
<dbReference type="RefSeq" id="WP_010906033.1">
    <property type="nucleotide sequence ID" value="NC_002662.1"/>
</dbReference>
<dbReference type="SMR" id="Q9CFB9"/>
<dbReference type="PaxDb" id="272623-L4747"/>
<dbReference type="EnsemblBacteria" id="AAK05660">
    <property type="protein sequence ID" value="AAK05660"/>
    <property type="gene ID" value="L4747"/>
</dbReference>
<dbReference type="KEGG" id="lla:L4747"/>
<dbReference type="PATRIC" id="fig|272623.7.peg.1680"/>
<dbReference type="eggNOG" id="COG1307">
    <property type="taxonomic scope" value="Bacteria"/>
</dbReference>
<dbReference type="HOGENOM" id="CLU_048251_3_1_9"/>
<dbReference type="OrthoDB" id="9775494at2"/>
<dbReference type="Proteomes" id="UP000002196">
    <property type="component" value="Chromosome"/>
</dbReference>
<dbReference type="GO" id="GO:0008289">
    <property type="term" value="F:lipid binding"/>
    <property type="evidence" value="ECO:0007669"/>
    <property type="project" value="UniProtKB-KW"/>
</dbReference>
<dbReference type="Gene3D" id="3.30.1180.10">
    <property type="match status" value="1"/>
</dbReference>
<dbReference type="Gene3D" id="3.40.50.10170">
    <property type="match status" value="1"/>
</dbReference>
<dbReference type="InterPro" id="IPR003797">
    <property type="entry name" value="DegV"/>
</dbReference>
<dbReference type="InterPro" id="IPR043168">
    <property type="entry name" value="DegV_C"/>
</dbReference>
<dbReference type="InterPro" id="IPR050270">
    <property type="entry name" value="DegV_domain_contain"/>
</dbReference>
<dbReference type="NCBIfam" id="TIGR00762">
    <property type="entry name" value="DegV"/>
    <property type="match status" value="1"/>
</dbReference>
<dbReference type="PANTHER" id="PTHR33434">
    <property type="entry name" value="DEGV DOMAIN-CONTAINING PROTEIN DR_1986-RELATED"/>
    <property type="match status" value="1"/>
</dbReference>
<dbReference type="PANTHER" id="PTHR33434:SF2">
    <property type="entry name" value="FATTY ACID-BINDING PROTEIN TM_1468"/>
    <property type="match status" value="1"/>
</dbReference>
<dbReference type="Pfam" id="PF02645">
    <property type="entry name" value="DegV"/>
    <property type="match status" value="1"/>
</dbReference>
<dbReference type="SUPFAM" id="SSF82549">
    <property type="entry name" value="DAK1/DegV-like"/>
    <property type="match status" value="1"/>
</dbReference>
<dbReference type="PROSITE" id="PS51482">
    <property type="entry name" value="DEGV"/>
    <property type="match status" value="1"/>
</dbReference>
<keyword id="KW-0446">Lipid-binding</keyword>
<keyword id="KW-1185">Reference proteome</keyword>
<protein>
    <recommendedName>
        <fullName>DegV domain-containing protein YqaC</fullName>
    </recommendedName>
</protein>
<reference key="1">
    <citation type="journal article" date="2001" name="Genome Res.">
        <title>The complete genome sequence of the lactic acid bacterium Lactococcus lactis ssp. lactis IL1403.</title>
        <authorList>
            <person name="Bolotin A."/>
            <person name="Wincker P."/>
            <person name="Mauger S."/>
            <person name="Jaillon O."/>
            <person name="Malarme K."/>
            <person name="Weissenbach J."/>
            <person name="Ehrlich S.D."/>
            <person name="Sorokin A."/>
        </authorList>
    </citation>
    <scope>NUCLEOTIDE SEQUENCE [LARGE SCALE GENOMIC DNA]</scope>
    <source>
        <strain>IL1403</strain>
    </source>
</reference>
<feature type="chain" id="PRO_0000209766" description="DegV domain-containing protein YqaC">
    <location>
        <begin position="1"/>
        <end position="281"/>
    </location>
</feature>
<feature type="domain" description="DegV" evidence="3">
    <location>
        <begin position="3"/>
        <end position="279"/>
    </location>
</feature>
<feature type="binding site" evidence="2">
    <location>
        <position position="60"/>
    </location>
    <ligand>
        <name>hexadecanoate</name>
        <dbReference type="ChEBI" id="CHEBI:7896"/>
    </ligand>
</feature>
<feature type="binding site" evidence="2">
    <location>
        <position position="93"/>
    </location>
    <ligand>
        <name>hexadecanoate</name>
        <dbReference type="ChEBI" id="CHEBI:7896"/>
    </ligand>
</feature>
<evidence type="ECO:0000250" key="1"/>
<evidence type="ECO:0000250" key="2">
    <source>
        <dbReference type="UniProtKB" id="Q9X1H9"/>
    </source>
</evidence>
<evidence type="ECO:0000255" key="3">
    <source>
        <dbReference type="PROSITE-ProRule" id="PRU00815"/>
    </source>
</evidence>